<name>CSTOS_RAT</name>
<gene>
    <name evidence="1" type="primary">Custos</name>
</gene>
<sequence length="277" mass="30056">MVAPSGAMSDSESSSSDSSDAEELARCREAATPAWGLEQRPREAERPAAGTADTQAPAPQPSRRREVNQHDEDGNELQTTPEFRAYVAKKLGALLDSSIAIAEVWKKTQQARLQQEAKEQQEAKEQQAAKEEQAAKKEEDGFRLFFTSVPGGHEKEASPRPCRKRQPPSSSEDSDEELQRCREAAVSASDILQESAIHCPAKVEKEAEKKKLKKKAKKKADADLAAATGLEQVKEAGSVNGDPVLSGTKKKKKKKAKKAREASLCPPAECAAAEPKN</sequence>
<keyword id="KW-0175">Coiled coil</keyword>
<keyword id="KW-0217">Developmental protein</keyword>
<keyword id="KW-0539">Nucleus</keyword>
<keyword id="KW-0597">Phosphoprotein</keyword>
<keyword id="KW-1185">Reference proteome</keyword>
<keyword id="KW-0879">Wnt signaling pathway</keyword>
<dbReference type="EMBL" id="BC088751">
    <property type="protein sequence ID" value="AAH88751.1"/>
    <property type="molecule type" value="mRNA"/>
</dbReference>
<dbReference type="RefSeq" id="NP_001009630.1">
    <property type="nucleotide sequence ID" value="NM_001009630.1"/>
</dbReference>
<dbReference type="FunCoup" id="Q5I034">
    <property type="interactions" value="1719"/>
</dbReference>
<dbReference type="STRING" id="10116.ENSRNOP00000050415"/>
<dbReference type="iPTMnet" id="Q5I034"/>
<dbReference type="PhosphoSitePlus" id="Q5I034"/>
<dbReference type="jPOST" id="Q5I034"/>
<dbReference type="PaxDb" id="10116-ENSRNOP00000050415"/>
<dbReference type="Ensembl" id="ENSRNOT00000050782.6">
    <property type="protein sequence ID" value="ENSRNOP00000050415.3"/>
    <property type="gene ID" value="ENSRNOG00000001185.8"/>
</dbReference>
<dbReference type="GeneID" id="288704"/>
<dbReference type="KEGG" id="rno:288704"/>
<dbReference type="AGR" id="RGD:1311899"/>
<dbReference type="CTD" id="288704"/>
<dbReference type="RGD" id="1311899">
    <property type="gene designation" value="C12h12orf43"/>
</dbReference>
<dbReference type="eggNOG" id="ENOG502S3AI">
    <property type="taxonomic scope" value="Eukaryota"/>
</dbReference>
<dbReference type="GeneTree" id="ENSGT00390000010771"/>
<dbReference type="HOGENOM" id="CLU_092827_0_0_1"/>
<dbReference type="InParanoid" id="Q5I034"/>
<dbReference type="OMA" id="WDCTALA"/>
<dbReference type="OrthoDB" id="90985at9989"/>
<dbReference type="PhylomeDB" id="Q5I034"/>
<dbReference type="TreeFam" id="TF336221"/>
<dbReference type="PRO" id="PR:Q5I034"/>
<dbReference type="Proteomes" id="UP000002494">
    <property type="component" value="Chromosome 12"/>
</dbReference>
<dbReference type="Bgee" id="ENSRNOG00000001185">
    <property type="expression patterns" value="Expressed in cerebellum and 20 other cell types or tissues"/>
</dbReference>
<dbReference type="GO" id="GO:0005635">
    <property type="term" value="C:nuclear envelope"/>
    <property type="evidence" value="ECO:0007669"/>
    <property type="project" value="UniProtKB-SubCell"/>
</dbReference>
<dbReference type="GO" id="GO:0030178">
    <property type="term" value="P:negative regulation of Wnt signaling pathway"/>
    <property type="evidence" value="ECO:0000318"/>
    <property type="project" value="GO_Central"/>
</dbReference>
<dbReference type="GO" id="GO:0060061">
    <property type="term" value="P:Spemann organizer formation"/>
    <property type="evidence" value="ECO:0000318"/>
    <property type="project" value="GO_Central"/>
</dbReference>
<dbReference type="GO" id="GO:0016055">
    <property type="term" value="P:Wnt signaling pathway"/>
    <property type="evidence" value="ECO:0007669"/>
    <property type="project" value="UniProtKB-KW"/>
</dbReference>
<dbReference type="InterPro" id="IPR026694">
    <property type="entry name" value="CUSTOS"/>
</dbReference>
<dbReference type="PANTHER" id="PTHR14482">
    <property type="entry name" value="CHROMOSOME 12 ORF 43 HOMOLOG"/>
    <property type="match status" value="1"/>
</dbReference>
<dbReference type="PANTHER" id="PTHR14482:SF0">
    <property type="entry name" value="PROTEIN CUSTOS"/>
    <property type="match status" value="1"/>
</dbReference>
<dbReference type="Pfam" id="PF23999">
    <property type="entry name" value="CUSTOS"/>
    <property type="match status" value="2"/>
</dbReference>
<accession>Q5I034</accession>
<feature type="chain" id="PRO_0000276852" description="Protein CUSTOS">
    <location>
        <begin position="1"/>
        <end position="277"/>
    </location>
</feature>
<feature type="region of interest" description="Disordered" evidence="4">
    <location>
        <begin position="1"/>
        <end position="81"/>
    </location>
</feature>
<feature type="region of interest" description="Disordered" evidence="4">
    <location>
        <begin position="108"/>
        <end position="182"/>
    </location>
</feature>
<feature type="region of interest" description="Disordered" evidence="4">
    <location>
        <begin position="238"/>
        <end position="277"/>
    </location>
</feature>
<feature type="coiled-coil region" evidence="3">
    <location>
        <begin position="106"/>
        <end position="141"/>
    </location>
</feature>
<feature type="short sequence motif" description="Nucleolar localization signal (NLS)">
    <location>
        <begin position="249"/>
        <end position="256"/>
    </location>
</feature>
<feature type="compositionally biased region" description="Low complexity" evidence="4">
    <location>
        <begin position="9"/>
        <end position="18"/>
    </location>
</feature>
<feature type="compositionally biased region" description="Basic and acidic residues" evidence="4">
    <location>
        <begin position="63"/>
        <end position="72"/>
    </location>
</feature>
<feature type="compositionally biased region" description="Basic and acidic residues" evidence="4">
    <location>
        <begin position="115"/>
        <end position="142"/>
    </location>
</feature>
<feature type="compositionally biased region" description="Basic residues" evidence="4">
    <location>
        <begin position="248"/>
        <end position="258"/>
    </location>
</feature>
<feature type="compositionally biased region" description="Low complexity" evidence="4">
    <location>
        <begin position="265"/>
        <end position="277"/>
    </location>
</feature>
<feature type="modified residue" description="Phosphoserine" evidence="2">
    <location>
        <position position="62"/>
    </location>
</feature>
<feature type="modified residue" description="Phosphothreonine" evidence="2">
    <location>
        <position position="80"/>
    </location>
</feature>
<feature type="modified residue" description="Phosphoserine" evidence="2">
    <location>
        <position position="158"/>
    </location>
</feature>
<feature type="modified residue" description="Phosphoserine" evidence="6">
    <location>
        <position position="238"/>
    </location>
</feature>
<proteinExistence type="evidence at protein level"/>
<protein>
    <recommendedName>
        <fullName evidence="1">Protein CUSTOS</fullName>
    </recommendedName>
</protein>
<reference key="1">
    <citation type="journal article" date="2004" name="Genome Res.">
        <title>The status, quality, and expansion of the NIH full-length cDNA project: the Mammalian Gene Collection (MGC).</title>
        <authorList>
            <consortium name="The MGC Project Team"/>
        </authorList>
    </citation>
    <scope>NUCLEOTIDE SEQUENCE [LARGE SCALE MRNA]</scope>
    <source>
        <tissue>Brain</tissue>
    </source>
</reference>
<reference key="2">
    <citation type="journal article" date="2012" name="Nat. Commun.">
        <title>Quantitative maps of protein phosphorylation sites across 14 different rat organs and tissues.</title>
        <authorList>
            <person name="Lundby A."/>
            <person name="Secher A."/>
            <person name="Lage K."/>
            <person name="Nordsborg N.B."/>
            <person name="Dmytriyev A."/>
            <person name="Lundby C."/>
            <person name="Olsen J.V."/>
        </authorList>
    </citation>
    <scope>PHOSPHORYLATION [LARGE SCALE ANALYSIS] AT SER-238</scope>
    <scope>IDENTIFICATION BY MASS SPECTROMETRY [LARGE SCALE ANALYSIS]</scope>
</reference>
<organism>
    <name type="scientific">Rattus norvegicus</name>
    <name type="common">Rat</name>
    <dbReference type="NCBI Taxonomy" id="10116"/>
    <lineage>
        <taxon>Eukaryota</taxon>
        <taxon>Metazoa</taxon>
        <taxon>Chordata</taxon>
        <taxon>Craniata</taxon>
        <taxon>Vertebrata</taxon>
        <taxon>Euteleostomi</taxon>
        <taxon>Mammalia</taxon>
        <taxon>Eutheria</taxon>
        <taxon>Euarchontoglires</taxon>
        <taxon>Glires</taxon>
        <taxon>Rodentia</taxon>
        <taxon>Myomorpha</taxon>
        <taxon>Muroidea</taxon>
        <taxon>Muridae</taxon>
        <taxon>Murinae</taxon>
        <taxon>Rattus</taxon>
    </lineage>
</organism>
<comment type="function">
    <text evidence="1">Plays a role in the regulation of Wnt signaling pathway during early development.</text>
</comment>
<comment type="subcellular location">
    <subcellularLocation>
        <location evidence="1">Nucleus envelope</location>
    </subcellularLocation>
</comment>
<comment type="similarity">
    <text evidence="5">Belongs to the CUSTOS family.</text>
</comment>
<evidence type="ECO:0000250" key="1">
    <source>
        <dbReference type="UniProtKB" id="A9C3N6"/>
    </source>
</evidence>
<evidence type="ECO:0000250" key="2">
    <source>
        <dbReference type="UniProtKB" id="Q96C57"/>
    </source>
</evidence>
<evidence type="ECO:0000255" key="3"/>
<evidence type="ECO:0000256" key="4">
    <source>
        <dbReference type="SAM" id="MobiDB-lite"/>
    </source>
</evidence>
<evidence type="ECO:0000305" key="5"/>
<evidence type="ECO:0007744" key="6">
    <source>
    </source>
</evidence>